<evidence type="ECO:0000255" key="1">
    <source>
        <dbReference type="HAMAP-Rule" id="MF_00133"/>
    </source>
</evidence>
<organism>
    <name type="scientific">Albidiferax ferrireducens (strain ATCC BAA-621 / DSM 15236 / T118)</name>
    <name type="common">Rhodoferax ferrireducens</name>
    <dbReference type="NCBI Taxonomy" id="338969"/>
    <lineage>
        <taxon>Bacteria</taxon>
        <taxon>Pseudomonadati</taxon>
        <taxon>Pseudomonadota</taxon>
        <taxon>Betaproteobacteria</taxon>
        <taxon>Burkholderiales</taxon>
        <taxon>Comamonadaceae</taxon>
        <taxon>Rhodoferax</taxon>
    </lineage>
</organism>
<comment type="function">
    <text evidence="1">The beta subunit is responsible for the synthesis of L-tryptophan from indole and L-serine.</text>
</comment>
<comment type="catalytic activity">
    <reaction evidence="1">
        <text>(1S,2R)-1-C-(indol-3-yl)glycerol 3-phosphate + L-serine = D-glyceraldehyde 3-phosphate + L-tryptophan + H2O</text>
        <dbReference type="Rhea" id="RHEA:10532"/>
        <dbReference type="ChEBI" id="CHEBI:15377"/>
        <dbReference type="ChEBI" id="CHEBI:33384"/>
        <dbReference type="ChEBI" id="CHEBI:57912"/>
        <dbReference type="ChEBI" id="CHEBI:58866"/>
        <dbReference type="ChEBI" id="CHEBI:59776"/>
        <dbReference type="EC" id="4.2.1.20"/>
    </reaction>
</comment>
<comment type="cofactor">
    <cofactor evidence="1">
        <name>pyridoxal 5'-phosphate</name>
        <dbReference type="ChEBI" id="CHEBI:597326"/>
    </cofactor>
</comment>
<comment type="pathway">
    <text evidence="1">Amino-acid biosynthesis; L-tryptophan biosynthesis; L-tryptophan from chorismate: step 5/5.</text>
</comment>
<comment type="subunit">
    <text evidence="1">Tetramer of two alpha and two beta chains.</text>
</comment>
<comment type="similarity">
    <text evidence="1">Belongs to the TrpB family.</text>
</comment>
<name>TRPB_ALBFT</name>
<gene>
    <name evidence="1" type="primary">trpB</name>
    <name type="ordered locus">Rfer_1788</name>
</gene>
<keyword id="KW-0028">Amino-acid biosynthesis</keyword>
<keyword id="KW-0057">Aromatic amino acid biosynthesis</keyword>
<keyword id="KW-0456">Lyase</keyword>
<keyword id="KW-0663">Pyridoxal phosphate</keyword>
<keyword id="KW-1185">Reference proteome</keyword>
<keyword id="KW-0822">Tryptophan biosynthesis</keyword>
<feature type="chain" id="PRO_1000095808" description="Tryptophan synthase beta chain">
    <location>
        <begin position="1"/>
        <end position="435"/>
    </location>
</feature>
<feature type="modified residue" description="N6-(pyridoxal phosphate)lysine" evidence="1">
    <location>
        <position position="92"/>
    </location>
</feature>
<accession>Q21XI6</accession>
<proteinExistence type="inferred from homology"/>
<protein>
    <recommendedName>
        <fullName evidence="1">Tryptophan synthase beta chain</fullName>
        <ecNumber evidence="1">4.2.1.20</ecNumber>
    </recommendedName>
</protein>
<dbReference type="EC" id="4.2.1.20" evidence="1"/>
<dbReference type="EMBL" id="CP000267">
    <property type="protein sequence ID" value="ABD69517.1"/>
    <property type="molecule type" value="Genomic_DNA"/>
</dbReference>
<dbReference type="RefSeq" id="WP_011464085.1">
    <property type="nucleotide sequence ID" value="NC_007908.1"/>
</dbReference>
<dbReference type="SMR" id="Q21XI6"/>
<dbReference type="STRING" id="338969.Rfer_1788"/>
<dbReference type="KEGG" id="rfr:Rfer_1788"/>
<dbReference type="eggNOG" id="COG0133">
    <property type="taxonomic scope" value="Bacteria"/>
</dbReference>
<dbReference type="HOGENOM" id="CLU_016734_3_1_4"/>
<dbReference type="OrthoDB" id="9766131at2"/>
<dbReference type="UniPathway" id="UPA00035">
    <property type="reaction ID" value="UER00044"/>
</dbReference>
<dbReference type="Proteomes" id="UP000008332">
    <property type="component" value="Chromosome"/>
</dbReference>
<dbReference type="GO" id="GO:0005737">
    <property type="term" value="C:cytoplasm"/>
    <property type="evidence" value="ECO:0007669"/>
    <property type="project" value="TreeGrafter"/>
</dbReference>
<dbReference type="GO" id="GO:0004834">
    <property type="term" value="F:tryptophan synthase activity"/>
    <property type="evidence" value="ECO:0007669"/>
    <property type="project" value="UniProtKB-UniRule"/>
</dbReference>
<dbReference type="CDD" id="cd06446">
    <property type="entry name" value="Trp-synth_B"/>
    <property type="match status" value="1"/>
</dbReference>
<dbReference type="FunFam" id="3.40.50.1100:FF:000001">
    <property type="entry name" value="Tryptophan synthase beta chain"/>
    <property type="match status" value="1"/>
</dbReference>
<dbReference type="FunFam" id="3.40.50.1100:FF:000004">
    <property type="entry name" value="Tryptophan synthase beta chain"/>
    <property type="match status" value="1"/>
</dbReference>
<dbReference type="Gene3D" id="3.40.50.1100">
    <property type="match status" value="2"/>
</dbReference>
<dbReference type="HAMAP" id="MF_00133">
    <property type="entry name" value="Trp_synth_beta"/>
    <property type="match status" value="1"/>
</dbReference>
<dbReference type="InterPro" id="IPR006653">
    <property type="entry name" value="Trp_synth_b_CS"/>
</dbReference>
<dbReference type="InterPro" id="IPR006654">
    <property type="entry name" value="Trp_synth_beta"/>
</dbReference>
<dbReference type="InterPro" id="IPR023026">
    <property type="entry name" value="Trp_synth_beta/beta-like"/>
</dbReference>
<dbReference type="InterPro" id="IPR001926">
    <property type="entry name" value="TrpB-like_PALP"/>
</dbReference>
<dbReference type="InterPro" id="IPR036052">
    <property type="entry name" value="TrpB-like_PALP_sf"/>
</dbReference>
<dbReference type="NCBIfam" id="TIGR00263">
    <property type="entry name" value="trpB"/>
    <property type="match status" value="1"/>
</dbReference>
<dbReference type="PANTHER" id="PTHR48077:SF3">
    <property type="entry name" value="TRYPTOPHAN SYNTHASE"/>
    <property type="match status" value="1"/>
</dbReference>
<dbReference type="PANTHER" id="PTHR48077">
    <property type="entry name" value="TRYPTOPHAN SYNTHASE-RELATED"/>
    <property type="match status" value="1"/>
</dbReference>
<dbReference type="Pfam" id="PF00291">
    <property type="entry name" value="PALP"/>
    <property type="match status" value="1"/>
</dbReference>
<dbReference type="PIRSF" id="PIRSF001413">
    <property type="entry name" value="Trp_syn_beta"/>
    <property type="match status" value="1"/>
</dbReference>
<dbReference type="SUPFAM" id="SSF53686">
    <property type="entry name" value="Tryptophan synthase beta subunit-like PLP-dependent enzymes"/>
    <property type="match status" value="1"/>
</dbReference>
<dbReference type="PROSITE" id="PS00168">
    <property type="entry name" value="TRP_SYNTHASE_BETA"/>
    <property type="match status" value="1"/>
</dbReference>
<sequence>MFEYQQPDPRGHFGIYGGSFVSETLTHAINELKAAYAKYQFDPAFVAEFNYELAHFVGRPSPVYHADRMSREQGGAQIFLKREDLNHTGAHKINNTIGQAMLARRMGKPRVIAETGAGQHGVATATICARYGLECVVYMGSEDVKRQSPNVYRMNLLGATVVPVESGSRTLKDALNEAMRDWVANVDNTFYIIGTVAGPHPYPMMVRDFQSVIGKECLVQMPEMLQAAGCHTTQPDAVVACVGGGSNAMGIFHPYIAHEATRLIGVEAAGLGMDSGKHSASLQRGSPGVLHGNRTYVLQDDNGQVTETHSISAGLDYPGVGPEHAFLKDIGRAEYVGITDQEALAAFHYLCRTEGIIPALESSHAVAYAMKLAKTMRPDQSILVNLSGRGDKDIGTVADLSHADFYCRPSCKGQSVKGADNAQPSANQQVVKVAQ</sequence>
<reference key="1">
    <citation type="submission" date="2006-02" db="EMBL/GenBank/DDBJ databases">
        <title>Complete sequence of chromosome of Rhodoferax ferrireducens DSM 15236.</title>
        <authorList>
            <person name="Copeland A."/>
            <person name="Lucas S."/>
            <person name="Lapidus A."/>
            <person name="Barry K."/>
            <person name="Detter J.C."/>
            <person name="Glavina del Rio T."/>
            <person name="Hammon N."/>
            <person name="Israni S."/>
            <person name="Pitluck S."/>
            <person name="Brettin T."/>
            <person name="Bruce D."/>
            <person name="Han C."/>
            <person name="Tapia R."/>
            <person name="Gilna P."/>
            <person name="Kiss H."/>
            <person name="Schmutz J."/>
            <person name="Larimer F."/>
            <person name="Land M."/>
            <person name="Kyrpides N."/>
            <person name="Ivanova N."/>
            <person name="Richardson P."/>
        </authorList>
    </citation>
    <scope>NUCLEOTIDE SEQUENCE [LARGE SCALE GENOMIC DNA]</scope>
    <source>
        <strain>ATCC BAA-621 / DSM 15236 / T118</strain>
    </source>
</reference>